<name>DHE4_AGABI</name>
<protein>
    <recommendedName>
        <fullName>NADP-specific glutamate dehydrogenase</fullName>
        <shortName>NADP-GDH</shortName>
        <ecNumber>1.4.1.4</ecNumber>
    </recommendedName>
    <alternativeName>
        <fullName>NADP-dependent glutamate dehydrogenase</fullName>
    </alternativeName>
</protein>
<comment type="catalytic activity">
    <reaction>
        <text>L-glutamate + NADP(+) + H2O = 2-oxoglutarate + NH4(+) + NADPH + H(+)</text>
        <dbReference type="Rhea" id="RHEA:11612"/>
        <dbReference type="ChEBI" id="CHEBI:15377"/>
        <dbReference type="ChEBI" id="CHEBI:15378"/>
        <dbReference type="ChEBI" id="CHEBI:16810"/>
        <dbReference type="ChEBI" id="CHEBI:28938"/>
        <dbReference type="ChEBI" id="CHEBI:29985"/>
        <dbReference type="ChEBI" id="CHEBI:57783"/>
        <dbReference type="ChEBI" id="CHEBI:58349"/>
        <dbReference type="EC" id="1.4.1.4"/>
    </reaction>
</comment>
<comment type="subunit">
    <text evidence="1">Homohexamer.</text>
</comment>
<comment type="similarity">
    <text evidence="3">Belongs to the Glu/Leu/Phe/Val dehydrogenases family.</text>
</comment>
<evidence type="ECO:0000250" key="1"/>
<evidence type="ECO:0000255" key="2">
    <source>
        <dbReference type="PROSITE-ProRule" id="PRU10011"/>
    </source>
</evidence>
<evidence type="ECO:0000305" key="3"/>
<feature type="chain" id="PRO_0000182783" description="NADP-specific glutamate dehydrogenase">
    <location>
        <begin position="1"/>
        <end position="457"/>
    </location>
</feature>
<feature type="active site" evidence="2">
    <location>
        <position position="111"/>
    </location>
</feature>
<gene>
    <name type="primary">gdhA</name>
</gene>
<organism>
    <name type="scientific">Agaricus bisporus</name>
    <name type="common">White button mushroom</name>
    <dbReference type="NCBI Taxonomy" id="5341"/>
    <lineage>
        <taxon>Eukaryota</taxon>
        <taxon>Fungi</taxon>
        <taxon>Dikarya</taxon>
        <taxon>Basidiomycota</taxon>
        <taxon>Agaricomycotina</taxon>
        <taxon>Agaricomycetes</taxon>
        <taxon>Agaricomycetidae</taxon>
        <taxon>Agaricales</taxon>
        <taxon>Agaricineae</taxon>
        <taxon>Agaricaceae</taxon>
        <taxon>Agaricus</taxon>
    </lineage>
</organism>
<keyword id="KW-0521">NADP</keyword>
<keyword id="KW-0560">Oxidoreductase</keyword>
<dbReference type="EC" id="1.4.1.4"/>
<dbReference type="EMBL" id="X83393">
    <property type="protein sequence ID" value="CAA58312.1"/>
    <property type="molecule type" value="Genomic_DNA"/>
</dbReference>
<dbReference type="PIR" id="S63608">
    <property type="entry name" value="S63608"/>
</dbReference>
<dbReference type="SMR" id="P54387"/>
<dbReference type="GO" id="GO:0005829">
    <property type="term" value="C:cytosol"/>
    <property type="evidence" value="ECO:0007669"/>
    <property type="project" value="TreeGrafter"/>
</dbReference>
<dbReference type="GO" id="GO:0004354">
    <property type="term" value="F:glutamate dehydrogenase (NADP+) activity"/>
    <property type="evidence" value="ECO:0007669"/>
    <property type="project" value="UniProtKB-EC"/>
</dbReference>
<dbReference type="GO" id="GO:0006537">
    <property type="term" value="P:glutamate biosynthetic process"/>
    <property type="evidence" value="ECO:0007669"/>
    <property type="project" value="TreeGrafter"/>
</dbReference>
<dbReference type="CDD" id="cd05313">
    <property type="entry name" value="NAD_bind_2_Glu_DH"/>
    <property type="match status" value="1"/>
</dbReference>
<dbReference type="FunFam" id="1.10.285.10:FF:000001">
    <property type="entry name" value="Glutamate dehydrogenase"/>
    <property type="match status" value="1"/>
</dbReference>
<dbReference type="FunFam" id="3.40.50.10860:FF:000002">
    <property type="entry name" value="Glutamate dehydrogenase"/>
    <property type="match status" value="1"/>
</dbReference>
<dbReference type="FunFam" id="3.40.50.720:FF:000030">
    <property type="entry name" value="Glutamate dehydrogenase"/>
    <property type="match status" value="1"/>
</dbReference>
<dbReference type="Gene3D" id="1.10.285.10">
    <property type="entry name" value="Glutamate Dehydrogenase, chain A, domain 3"/>
    <property type="match status" value="2"/>
</dbReference>
<dbReference type="Gene3D" id="3.40.50.10860">
    <property type="entry name" value="Leucine Dehydrogenase, chain A, domain 1"/>
    <property type="match status" value="1"/>
</dbReference>
<dbReference type="Gene3D" id="3.40.50.720">
    <property type="entry name" value="NAD(P)-binding Rossmann-like Domain"/>
    <property type="match status" value="1"/>
</dbReference>
<dbReference type="InterPro" id="IPR046346">
    <property type="entry name" value="Aminoacid_DH-like_N_sf"/>
</dbReference>
<dbReference type="InterPro" id="IPR006095">
    <property type="entry name" value="Glu/Leu/Phe/Val/Trp_DH"/>
</dbReference>
<dbReference type="InterPro" id="IPR006096">
    <property type="entry name" value="Glu/Leu/Phe/Val/Trp_DH_C"/>
</dbReference>
<dbReference type="InterPro" id="IPR006097">
    <property type="entry name" value="Glu/Leu/Phe/Val/Trp_DH_dimer"/>
</dbReference>
<dbReference type="InterPro" id="IPR033524">
    <property type="entry name" value="Glu/Leu/Phe/Val_DH_AS"/>
</dbReference>
<dbReference type="InterPro" id="IPR014362">
    <property type="entry name" value="Glu_DH"/>
</dbReference>
<dbReference type="InterPro" id="IPR050724">
    <property type="entry name" value="Glu_Leu_Phe_Val_DH"/>
</dbReference>
<dbReference type="InterPro" id="IPR036291">
    <property type="entry name" value="NAD(P)-bd_dom_sf"/>
</dbReference>
<dbReference type="InterPro" id="IPR033922">
    <property type="entry name" value="NAD_bind_Glu_DH"/>
</dbReference>
<dbReference type="NCBIfam" id="NF006929">
    <property type="entry name" value="PRK09414.1"/>
    <property type="match status" value="1"/>
</dbReference>
<dbReference type="PANTHER" id="PTHR43571">
    <property type="entry name" value="NADP-SPECIFIC GLUTAMATE DEHYDROGENASE 1-RELATED"/>
    <property type="match status" value="1"/>
</dbReference>
<dbReference type="PANTHER" id="PTHR43571:SF1">
    <property type="entry name" value="NADP-SPECIFIC GLUTAMATE DEHYDROGENASE 1-RELATED"/>
    <property type="match status" value="1"/>
</dbReference>
<dbReference type="Pfam" id="PF00208">
    <property type="entry name" value="ELFV_dehydrog"/>
    <property type="match status" value="1"/>
</dbReference>
<dbReference type="Pfam" id="PF02812">
    <property type="entry name" value="ELFV_dehydrog_N"/>
    <property type="match status" value="1"/>
</dbReference>
<dbReference type="PIRSF" id="PIRSF000185">
    <property type="entry name" value="Glu_DH"/>
    <property type="match status" value="1"/>
</dbReference>
<dbReference type="PRINTS" id="PR00082">
    <property type="entry name" value="GLFDHDRGNASE"/>
</dbReference>
<dbReference type="SMART" id="SM00839">
    <property type="entry name" value="ELFV_dehydrog"/>
    <property type="match status" value="1"/>
</dbReference>
<dbReference type="SUPFAM" id="SSF53223">
    <property type="entry name" value="Aminoacid dehydrogenase-like, N-terminal domain"/>
    <property type="match status" value="1"/>
</dbReference>
<dbReference type="SUPFAM" id="SSF51735">
    <property type="entry name" value="NAD(P)-binding Rossmann-fold domains"/>
    <property type="match status" value="1"/>
</dbReference>
<dbReference type="PROSITE" id="PS00074">
    <property type="entry name" value="GLFV_DEHYDROGENASE"/>
    <property type="match status" value="1"/>
</dbReference>
<sequence length="457" mass="49557">MVLPHEPEFEQALHELETSLQPFLTTNPQYKKALEIIQVPERVLQFRVTWEDDQGKPQVNRGFRVQYNSALGPYKGGLRLHPTVNLSILKFLGFEQTFKNALTGLSMGGGKGGSDFDPKGKSDNEIRRFCVAFMSELFRHIGQDTDVPAGDIGTGAREIGFLFGAYRRLKNEFTGMLTGKGINWGGSFIRPEATGYGLIYYVEHMIAHACPEYSLDRPSTLVAISGSGNVSQFTALKVIELGATVLSLSDSKGSLISEKGYTKEAIEKIAELKLKGGALEAIVDDLGAGYTYHAGKRPWTLLPQVHIALPGATQNEVSQEEAEALVKAGTRIVAEGSNMGCTEEAIAIFENSRRASRAGVWYAPGKASNCGGVAVSGLEMAQNSQRLAWSTQEVDAKLKSIMAECYQICYTAGSRWSGEKVAEGVAEGEALPSLLSGANLAGFIKVADAMKEQGDWW</sequence>
<reference key="1">
    <citation type="journal article" date="1996" name="Mol. Gen. Genet.">
        <title>Nucleotide sequence and expression of the gene encoding NADP+-dependent glutamate dehydrogenase (gdhA) from Agaricus bisporus.</title>
        <authorList>
            <person name="Schaap P.J."/>
            <person name="Mueller Y."/>
            <person name="Baars J.J.P."/>
            <person name="Op den Camp H.J.M."/>
            <person name="Sonnenberg A.S.M."/>
            <person name="van Griensven L.J.L.D."/>
            <person name="Visser J."/>
        </authorList>
    </citation>
    <scope>NUCLEOTIDE SEQUENCE [GENOMIC DNA]</scope>
    <source>
        <strain>Horst H39</strain>
    </source>
</reference>
<proteinExistence type="inferred from homology"/>
<accession>P54387</accession>